<proteinExistence type="evidence at protein level"/>
<accession>P08240</accession>
<accession>A6NIB3</accession>
<accession>B2R5Z8</accession>
<accession>B4E0H3</accession>
<accession>E9PJS4</accession>
<accession>Q9BVJ4</accession>
<dbReference type="EMBL" id="X06272">
    <property type="protein sequence ID" value="CAA29608.1"/>
    <property type="molecule type" value="mRNA"/>
</dbReference>
<dbReference type="EMBL" id="AK303379">
    <property type="protein sequence ID" value="BAG64435.1"/>
    <property type="molecule type" value="mRNA"/>
</dbReference>
<dbReference type="EMBL" id="AK312377">
    <property type="protein sequence ID" value="BAG35295.1"/>
    <property type="molecule type" value="mRNA"/>
</dbReference>
<dbReference type="EMBL" id="AP001318">
    <property type="status" value="NOT_ANNOTATED_CDS"/>
    <property type="molecule type" value="Genomic_DNA"/>
</dbReference>
<dbReference type="EMBL" id="CH471065">
    <property type="protein sequence ID" value="EAW67686.1"/>
    <property type="molecule type" value="Genomic_DNA"/>
</dbReference>
<dbReference type="EMBL" id="BC001162">
    <property type="protein sequence ID" value="AAH01162.1"/>
    <property type="molecule type" value="mRNA"/>
</dbReference>
<dbReference type="EMBL" id="BC009110">
    <property type="protein sequence ID" value="AAH09110.1"/>
    <property type="molecule type" value="mRNA"/>
</dbReference>
<dbReference type="EMBL" id="BC013583">
    <property type="protein sequence ID" value="AAH13583.1"/>
    <property type="molecule type" value="mRNA"/>
</dbReference>
<dbReference type="CCDS" id="CCDS31717.1">
    <molecule id="P08240-1"/>
</dbReference>
<dbReference type="CCDS" id="CCDS53722.1">
    <molecule id="P08240-2"/>
</dbReference>
<dbReference type="PIR" id="A29440">
    <property type="entry name" value="A29440"/>
</dbReference>
<dbReference type="RefSeq" id="NP_001171313.1">
    <molecule id="P08240-2"/>
    <property type="nucleotide sequence ID" value="NM_001177842.2"/>
</dbReference>
<dbReference type="RefSeq" id="NP_003130.2">
    <molecule id="P08240-1"/>
    <property type="nucleotide sequence ID" value="NM_003139.3"/>
</dbReference>
<dbReference type="PDB" id="2FH5">
    <property type="method" value="X-ray"/>
    <property type="resolution" value="2.45 A"/>
    <property type="chains" value="A=3-176"/>
</dbReference>
<dbReference type="PDB" id="2GO5">
    <property type="method" value="EM"/>
    <property type="resolution" value="7.40 A"/>
    <property type="chains" value="1=3-176"/>
</dbReference>
<dbReference type="PDB" id="5L3Q">
    <property type="method" value="X-ray"/>
    <property type="resolution" value="3.20 A"/>
    <property type="chains" value="B/D=1-638"/>
</dbReference>
<dbReference type="PDB" id="6Y32">
    <property type="method" value="X-ray"/>
    <property type="resolution" value="2.60 A"/>
    <property type="chains" value="B/D/F/H=332-638"/>
</dbReference>
<dbReference type="PDB" id="7NFX">
    <property type="method" value="EM"/>
    <property type="resolution" value="3.20 A"/>
    <property type="chains" value="y=1-638"/>
</dbReference>
<dbReference type="PDBsum" id="2FH5"/>
<dbReference type="PDBsum" id="2GO5"/>
<dbReference type="PDBsum" id="5L3Q"/>
<dbReference type="PDBsum" id="6Y32"/>
<dbReference type="PDBsum" id="7NFX"/>
<dbReference type="EMDB" id="EMD-12303"/>
<dbReference type="SMR" id="P08240"/>
<dbReference type="BioGRID" id="112612">
    <property type="interactions" value="322"/>
</dbReference>
<dbReference type="ComplexPortal" id="CPX-630">
    <property type="entry name" value="Signal recognition particle receptor complex"/>
</dbReference>
<dbReference type="FunCoup" id="P08240">
    <property type="interactions" value="2075"/>
</dbReference>
<dbReference type="IntAct" id="P08240">
    <property type="interactions" value="154"/>
</dbReference>
<dbReference type="MINT" id="P08240"/>
<dbReference type="STRING" id="9606.ENSP00000328023"/>
<dbReference type="ChEMBL" id="CHEMBL4105934"/>
<dbReference type="GlyGen" id="P08240">
    <property type="glycosylation" value="5 sites, 2 N-linked glycans (2 sites), 1 O-linked glycan (3 sites)"/>
</dbReference>
<dbReference type="iPTMnet" id="P08240"/>
<dbReference type="MetOSite" id="P08240"/>
<dbReference type="PhosphoSitePlus" id="P08240"/>
<dbReference type="SwissPalm" id="P08240"/>
<dbReference type="BioMuta" id="SRPRA"/>
<dbReference type="DMDM" id="20455516"/>
<dbReference type="jPOST" id="P08240"/>
<dbReference type="MassIVE" id="P08240"/>
<dbReference type="PaxDb" id="9606-ENSP00000328023"/>
<dbReference type="PeptideAtlas" id="P08240"/>
<dbReference type="ProteomicsDB" id="21234"/>
<dbReference type="ProteomicsDB" id="52097">
    <molecule id="P08240-1"/>
</dbReference>
<dbReference type="Pumba" id="P08240"/>
<dbReference type="Antibodypedia" id="32980">
    <property type="antibodies" value="157 antibodies from 22 providers"/>
</dbReference>
<dbReference type="DNASU" id="6734"/>
<dbReference type="Ensembl" id="ENST00000332118.11">
    <molecule id="P08240-1"/>
    <property type="protein sequence ID" value="ENSP00000328023.5"/>
    <property type="gene ID" value="ENSG00000182934.12"/>
</dbReference>
<dbReference type="Ensembl" id="ENST00000532259.1">
    <molecule id="P08240-2"/>
    <property type="protein sequence ID" value="ENSP00000435508.1"/>
    <property type="gene ID" value="ENSG00000182934.12"/>
</dbReference>
<dbReference type="GeneID" id="6734"/>
<dbReference type="KEGG" id="hsa:6734"/>
<dbReference type="MANE-Select" id="ENST00000332118.11">
    <property type="protein sequence ID" value="ENSP00000328023.5"/>
    <property type="RefSeq nucleotide sequence ID" value="NM_003139.4"/>
    <property type="RefSeq protein sequence ID" value="NP_003130.2"/>
</dbReference>
<dbReference type="UCSC" id="uc001qdh.4">
    <molecule id="P08240-1"/>
    <property type="organism name" value="human"/>
</dbReference>
<dbReference type="AGR" id="HGNC:11307"/>
<dbReference type="CTD" id="6734"/>
<dbReference type="DisGeNET" id="6734"/>
<dbReference type="GeneCards" id="SRPRA"/>
<dbReference type="HGNC" id="HGNC:11307">
    <property type="gene designation" value="SRPRA"/>
</dbReference>
<dbReference type="HPA" id="ENSG00000182934">
    <property type="expression patterns" value="Low tissue specificity"/>
</dbReference>
<dbReference type="MalaCards" id="SRPRA"/>
<dbReference type="MIM" id="182180">
    <property type="type" value="gene"/>
</dbReference>
<dbReference type="neXtProt" id="NX_P08240"/>
<dbReference type="OpenTargets" id="ENSG00000182934"/>
<dbReference type="PharmGKB" id="PA36131"/>
<dbReference type="VEuPathDB" id="HostDB:ENSG00000182934"/>
<dbReference type="eggNOG" id="KOG0781">
    <property type="taxonomic scope" value="Eukaryota"/>
</dbReference>
<dbReference type="GeneTree" id="ENSGT00550000074936"/>
<dbReference type="HOGENOM" id="CLU_009301_8_0_1"/>
<dbReference type="InParanoid" id="P08240"/>
<dbReference type="OMA" id="HLGWIDK"/>
<dbReference type="OrthoDB" id="1727884at2759"/>
<dbReference type="PAN-GO" id="P08240">
    <property type="GO annotations" value="4 GO annotations based on evolutionary models"/>
</dbReference>
<dbReference type="PhylomeDB" id="P08240"/>
<dbReference type="TreeFam" id="TF106189"/>
<dbReference type="BRENDA" id="3.6.5.4">
    <property type="organism ID" value="2681"/>
</dbReference>
<dbReference type="PathwayCommons" id="P08240"/>
<dbReference type="Reactome" id="R-HSA-1799339">
    <property type="pathway name" value="SRP-dependent cotranslational protein targeting to membrane"/>
</dbReference>
<dbReference type="Reactome" id="R-HSA-381038">
    <property type="pathway name" value="XBP1(S) activates chaperone genes"/>
</dbReference>
<dbReference type="SignaLink" id="P08240"/>
<dbReference type="SIGNOR" id="P08240"/>
<dbReference type="BioGRID-ORCS" id="6734">
    <property type="hits" value="598 hits in 1145 CRISPR screens"/>
</dbReference>
<dbReference type="CD-CODE" id="FB4E32DD">
    <property type="entry name" value="Presynaptic clusters and postsynaptic densities"/>
</dbReference>
<dbReference type="ChiTaRS" id="SRPRA">
    <property type="organism name" value="human"/>
</dbReference>
<dbReference type="EvolutionaryTrace" id="P08240"/>
<dbReference type="GenomeRNAi" id="6734"/>
<dbReference type="Pharos" id="P08240">
    <property type="development level" value="Tchem"/>
</dbReference>
<dbReference type="PRO" id="PR:P08240"/>
<dbReference type="Proteomes" id="UP000005640">
    <property type="component" value="Chromosome 11"/>
</dbReference>
<dbReference type="RNAct" id="P08240">
    <property type="molecule type" value="protein"/>
</dbReference>
<dbReference type="Bgee" id="ENSG00000182934">
    <property type="expression patterns" value="Expressed in parotid gland and 205 other cell types or tissues"/>
</dbReference>
<dbReference type="GO" id="GO:0005789">
    <property type="term" value="C:endoplasmic reticulum membrane"/>
    <property type="evidence" value="ECO:0000318"/>
    <property type="project" value="GO_Central"/>
</dbReference>
<dbReference type="GO" id="GO:0070062">
    <property type="term" value="C:extracellular exosome"/>
    <property type="evidence" value="ECO:0007005"/>
    <property type="project" value="UniProtKB"/>
</dbReference>
<dbReference type="GO" id="GO:0016020">
    <property type="term" value="C:membrane"/>
    <property type="evidence" value="ECO:0000314"/>
    <property type="project" value="MGI"/>
</dbReference>
<dbReference type="GO" id="GO:0005785">
    <property type="term" value="C:signal recognition particle receptor complex"/>
    <property type="evidence" value="ECO:0000269"/>
    <property type="project" value="ComplexPortal"/>
</dbReference>
<dbReference type="GO" id="GO:0016887">
    <property type="term" value="F:ATP hydrolysis activity"/>
    <property type="evidence" value="ECO:0007669"/>
    <property type="project" value="InterPro"/>
</dbReference>
<dbReference type="GO" id="GO:0005525">
    <property type="term" value="F:GTP binding"/>
    <property type="evidence" value="ECO:0007669"/>
    <property type="project" value="UniProtKB-KW"/>
</dbReference>
<dbReference type="GO" id="GO:0003924">
    <property type="term" value="F:GTPase activity"/>
    <property type="evidence" value="ECO:0000318"/>
    <property type="project" value="GO_Central"/>
</dbReference>
<dbReference type="GO" id="GO:0003723">
    <property type="term" value="F:RNA binding"/>
    <property type="evidence" value="ECO:0007005"/>
    <property type="project" value="UniProtKB"/>
</dbReference>
<dbReference type="GO" id="GO:0005047">
    <property type="term" value="F:signal recognition particle binding"/>
    <property type="evidence" value="ECO:0000318"/>
    <property type="project" value="GO_Central"/>
</dbReference>
<dbReference type="GO" id="GO:0006613">
    <property type="term" value="P:cotranslational protein targeting to membrane"/>
    <property type="evidence" value="ECO:0000304"/>
    <property type="project" value="ProtInc"/>
</dbReference>
<dbReference type="GO" id="GO:0006886">
    <property type="term" value="P:intracellular protein transport"/>
    <property type="evidence" value="ECO:0007669"/>
    <property type="project" value="InterPro"/>
</dbReference>
<dbReference type="GO" id="GO:0045047">
    <property type="term" value="P:protein targeting to ER"/>
    <property type="evidence" value="ECO:0000318"/>
    <property type="project" value="GO_Central"/>
</dbReference>
<dbReference type="GO" id="GO:0006617">
    <property type="term" value="P:SRP-dependent cotranslational protein targeting to membrane, signal sequence recognition"/>
    <property type="evidence" value="ECO:0000303"/>
    <property type="project" value="ComplexPortal"/>
</dbReference>
<dbReference type="CDD" id="cd14826">
    <property type="entry name" value="SR_alpha_SRX"/>
    <property type="match status" value="1"/>
</dbReference>
<dbReference type="CDD" id="cd17876">
    <property type="entry name" value="SRalpha_C"/>
    <property type="match status" value="1"/>
</dbReference>
<dbReference type="DisProt" id="DP00893"/>
<dbReference type="FunFam" id="3.40.50.300:FF:000188">
    <property type="entry name" value="signal recognition particle receptor subunit alpha"/>
    <property type="match status" value="1"/>
</dbReference>
<dbReference type="FunFam" id="1.20.120.140:FF:000010">
    <property type="entry name" value="signal recognition particle receptor subunit alpha isoform X2"/>
    <property type="match status" value="1"/>
</dbReference>
<dbReference type="FunFam" id="3.30.450.60:FF:000021">
    <property type="entry name" value="signal recognition particle receptor subunit alpha isoform X2"/>
    <property type="match status" value="1"/>
</dbReference>
<dbReference type="Gene3D" id="3.30.450.60">
    <property type="match status" value="1"/>
</dbReference>
<dbReference type="Gene3D" id="3.40.50.300">
    <property type="entry name" value="P-loop containing nucleotide triphosphate hydrolases"/>
    <property type="match status" value="1"/>
</dbReference>
<dbReference type="Gene3D" id="1.20.120.140">
    <property type="entry name" value="Signal recognition particle SRP54, nucleotide-binding domain"/>
    <property type="match status" value="1"/>
</dbReference>
<dbReference type="InterPro" id="IPR003593">
    <property type="entry name" value="AAA+_ATPase"/>
</dbReference>
<dbReference type="InterPro" id="IPR011012">
    <property type="entry name" value="Longin-like_dom_sf"/>
</dbReference>
<dbReference type="InterPro" id="IPR027417">
    <property type="entry name" value="P-loop_NTPase"/>
</dbReference>
<dbReference type="InterPro" id="IPR007222">
    <property type="entry name" value="Sig_recog_particle_rcpt_asu_N"/>
</dbReference>
<dbReference type="InterPro" id="IPR013822">
    <property type="entry name" value="Signal_recog_particl_SRP54_hlx"/>
</dbReference>
<dbReference type="InterPro" id="IPR036225">
    <property type="entry name" value="SRP/SRP_N"/>
</dbReference>
<dbReference type="InterPro" id="IPR000897">
    <property type="entry name" value="SRP54_GTPase_dom"/>
</dbReference>
<dbReference type="InterPro" id="IPR042101">
    <property type="entry name" value="SRP54_N_sf"/>
</dbReference>
<dbReference type="PANTHER" id="PTHR43134">
    <property type="entry name" value="SIGNAL RECOGNITION PARTICLE RECEPTOR SUBUNIT ALPHA"/>
    <property type="match status" value="1"/>
</dbReference>
<dbReference type="PANTHER" id="PTHR43134:SF1">
    <property type="entry name" value="SIGNAL RECOGNITION PARTICLE RECEPTOR SUBUNIT ALPHA"/>
    <property type="match status" value="1"/>
</dbReference>
<dbReference type="Pfam" id="PF04086">
    <property type="entry name" value="SRP-alpha_N"/>
    <property type="match status" value="1"/>
</dbReference>
<dbReference type="Pfam" id="PF00448">
    <property type="entry name" value="SRP54"/>
    <property type="match status" value="1"/>
</dbReference>
<dbReference type="Pfam" id="PF02881">
    <property type="entry name" value="SRP54_N"/>
    <property type="match status" value="1"/>
</dbReference>
<dbReference type="SMART" id="SM00382">
    <property type="entry name" value="AAA"/>
    <property type="match status" value="1"/>
</dbReference>
<dbReference type="SMART" id="SM00962">
    <property type="entry name" value="SRP54"/>
    <property type="match status" value="1"/>
</dbReference>
<dbReference type="SMART" id="SM00963">
    <property type="entry name" value="SRP54_N"/>
    <property type="match status" value="1"/>
</dbReference>
<dbReference type="SUPFAM" id="SSF47364">
    <property type="entry name" value="Domain of the SRP/SRP receptor G-proteins"/>
    <property type="match status" value="1"/>
</dbReference>
<dbReference type="SUPFAM" id="SSF52540">
    <property type="entry name" value="P-loop containing nucleoside triphosphate hydrolases"/>
    <property type="match status" value="1"/>
</dbReference>
<dbReference type="SUPFAM" id="SSF64356">
    <property type="entry name" value="SNARE-like"/>
    <property type="match status" value="1"/>
</dbReference>
<dbReference type="PROSITE" id="PS00300">
    <property type="entry name" value="SRP54"/>
    <property type="match status" value="1"/>
</dbReference>
<organism>
    <name type="scientific">Homo sapiens</name>
    <name type="common">Human</name>
    <dbReference type="NCBI Taxonomy" id="9606"/>
    <lineage>
        <taxon>Eukaryota</taxon>
        <taxon>Metazoa</taxon>
        <taxon>Chordata</taxon>
        <taxon>Craniata</taxon>
        <taxon>Vertebrata</taxon>
        <taxon>Euteleostomi</taxon>
        <taxon>Mammalia</taxon>
        <taxon>Eutheria</taxon>
        <taxon>Euarchontoglires</taxon>
        <taxon>Primates</taxon>
        <taxon>Haplorrhini</taxon>
        <taxon>Catarrhini</taxon>
        <taxon>Hominidae</taxon>
        <taxon>Homo</taxon>
    </lineage>
</organism>
<sequence length="638" mass="69811">MLDFFTIFSKGGLVLWCFQGVSDSCTGPVNALIRSVLLQERGGNNSFTHEALTLKYKLDNQFELVFVVGFQKILTLTYVDKLIDDVHRLFRDKYRTEIQQQSALSLLNGTFDFQNDFLRLLREAEESSKIRAPTTMKKFEDSEKAKKPVRSMIETRGEKPKEKAKNSKKKGAKKEGSDGPLATSKPVPAEKSGLPVGPENGVELSKEELIRRKREEFIQKHGRGMEKSNKSTKSDAPKEKGKKAPRVWELGGCANKEVLDYSTPTTNGTPEAALSEDINLIRGTGSGGQLQDLDCSSSDDEGAAQNSTKPSATKGTLGGMFGMLKGLVGSKSLSREDMESVLDKMRDHLIAKNVAADIAVQLCESVANKLEGKVMGTFSTVTSTVKQALQESLVQILQPQRRVDMLRDIMDAQRRQRPYVVTFCGVNGVGKSTNLAKISFWLLENGFSVLIAACDTFRAGAVEQLRTHTRRLSALHPPEKHGGRTMVQLFEKGYGKDAAGIAMEAIAFARNQGFDVVLVDTAGRMQDNAPLMTALAKLITVNTPDLVLFVGEALVGNEAVDQLVKFNRALADHSMAQTPRLIDGIVLTKFDTIDDKVGAAISMTYITSKPIVFVGTGQTYCDLRSLNAKAVVAALMKA</sequence>
<feature type="chain" id="PRO_0000101213" description="Signal recognition particle receptor subunit alpha">
    <location>
        <begin position="1"/>
        <end position="638"/>
    </location>
</feature>
<feature type="region of interest" description="Disordered" evidence="3">
    <location>
        <begin position="132"/>
        <end position="244"/>
    </location>
</feature>
<feature type="region of interest" description="Disordered" evidence="3">
    <location>
        <begin position="283"/>
        <end position="316"/>
    </location>
</feature>
<feature type="region of interest" description="NG domain" evidence="9">
    <location>
        <begin position="419"/>
        <end position="636"/>
    </location>
</feature>
<feature type="compositionally biased region" description="Basic and acidic residues" evidence="3">
    <location>
        <begin position="137"/>
        <end position="146"/>
    </location>
</feature>
<feature type="compositionally biased region" description="Basic and acidic residues" evidence="3">
    <location>
        <begin position="153"/>
        <end position="165"/>
    </location>
</feature>
<feature type="compositionally biased region" description="Basic and acidic residues" evidence="3">
    <location>
        <begin position="204"/>
        <end position="239"/>
    </location>
</feature>
<feature type="compositionally biased region" description="Polar residues" evidence="3">
    <location>
        <begin position="304"/>
        <end position="314"/>
    </location>
</feature>
<feature type="binding site" evidence="1">
    <location>
        <begin position="425"/>
        <end position="432"/>
    </location>
    <ligand>
        <name>GTP</name>
        <dbReference type="ChEBI" id="CHEBI:37565"/>
    </ligand>
</feature>
<feature type="binding site" evidence="1">
    <location>
        <begin position="520"/>
        <end position="524"/>
    </location>
    <ligand>
        <name>GTP</name>
        <dbReference type="ChEBI" id="CHEBI:37565"/>
    </ligand>
</feature>
<feature type="binding site" evidence="1">
    <location>
        <begin position="588"/>
        <end position="591"/>
    </location>
    <ligand>
        <name>GTP</name>
        <dbReference type="ChEBI" id="CHEBI:37565"/>
    </ligand>
</feature>
<feature type="modified residue" description="Phosphoserine" evidence="14">
    <location>
        <position position="177"/>
    </location>
</feature>
<feature type="modified residue" description="Phosphothreonine" evidence="15">
    <location>
        <position position="284"/>
    </location>
</feature>
<feature type="modified residue" description="Phosphoserine" evidence="13 15">
    <location>
        <position position="296"/>
    </location>
</feature>
<feature type="modified residue" description="Phosphoserine" evidence="13 15">
    <location>
        <position position="297"/>
    </location>
</feature>
<feature type="modified residue" description="Phosphoserine" evidence="13 15">
    <location>
        <position position="298"/>
    </location>
</feature>
<feature type="modified residue" description="Phosphoserine" evidence="14">
    <location>
        <position position="473"/>
    </location>
</feature>
<feature type="modified residue" description="Phosphothreonine" evidence="14">
    <location>
        <position position="578"/>
    </location>
</feature>
<feature type="splice variant" id="VSP_046055" description="In isoform 2." evidence="8">
    <location>
        <begin position="40"/>
        <end position="67"/>
    </location>
</feature>
<feature type="mutagenesis site" description="Reduced SR compaction. Impaired interaction with SRP. Impaired detachement from ribosome. Does not impair GTP hydrolysis by the SRP-SR complex." evidence="7">
    <original>R</original>
    <variation>A</variation>
    <location>
        <position position="407"/>
    </location>
</feature>
<feature type="sequence conflict" description="In Ref. 1; CAA29608." evidence="10" ref="1">
    <original>K</original>
    <variation>R</variation>
    <location>
        <position position="81"/>
    </location>
</feature>
<feature type="sequence conflict" description="In Ref. 1; CAA29608." evidence="10" ref="1">
    <original>G</original>
    <variation>E</variation>
    <location>
        <position position="201"/>
    </location>
</feature>
<feature type="sequence conflict" description="In Ref. 1; CAA29608." evidence="10" ref="1">
    <original>NS</original>
    <variation>TL</variation>
    <location>
        <begin position="306"/>
        <end position="307"/>
    </location>
</feature>
<feature type="sequence conflict" description="In Ref. 2; BAG64435." evidence="10" ref="2">
    <original>V</original>
    <variation>L</variation>
    <location>
        <position position="632"/>
    </location>
</feature>
<feature type="strand" evidence="16">
    <location>
        <begin position="3"/>
        <end position="9"/>
    </location>
</feature>
<feature type="strand" evidence="16">
    <location>
        <begin position="12"/>
        <end position="19"/>
    </location>
</feature>
<feature type="turn" evidence="16">
    <location>
        <begin position="20"/>
        <end position="22"/>
    </location>
</feature>
<feature type="helix" evidence="16">
    <location>
        <begin position="28"/>
        <end position="35"/>
    </location>
</feature>
<feature type="helix" evidence="16">
    <location>
        <begin position="37"/>
        <end position="39"/>
    </location>
</feature>
<feature type="strand" evidence="16">
    <location>
        <begin position="53"/>
        <end position="59"/>
    </location>
</feature>
<feature type="turn" evidence="16">
    <location>
        <begin position="60"/>
        <end position="63"/>
    </location>
</feature>
<feature type="strand" evidence="16">
    <location>
        <begin position="64"/>
        <end position="71"/>
    </location>
</feature>
<feature type="helix" evidence="16">
    <location>
        <begin position="73"/>
        <end position="75"/>
    </location>
</feature>
<feature type="helix" evidence="16">
    <location>
        <begin position="76"/>
        <end position="93"/>
    </location>
</feature>
<feature type="helix" evidence="16">
    <location>
        <begin position="95"/>
        <end position="99"/>
    </location>
</feature>
<feature type="strand" evidence="16">
    <location>
        <begin position="100"/>
        <end position="102"/>
    </location>
</feature>
<feature type="helix" evidence="16">
    <location>
        <begin position="104"/>
        <end position="107"/>
    </location>
</feature>
<feature type="helix" evidence="16">
    <location>
        <begin position="114"/>
        <end position="127"/>
    </location>
</feature>
<feature type="helix" evidence="18">
    <location>
        <begin position="332"/>
        <end position="351"/>
    </location>
</feature>
<feature type="helix" evidence="18">
    <location>
        <begin position="356"/>
        <end position="370"/>
    </location>
</feature>
<feature type="helix" evidence="18">
    <location>
        <begin position="378"/>
        <end position="397"/>
    </location>
</feature>
<feature type="helix" evidence="18">
    <location>
        <begin position="405"/>
        <end position="415"/>
    </location>
</feature>
<feature type="strand" evidence="18">
    <location>
        <begin position="419"/>
        <end position="424"/>
    </location>
</feature>
<feature type="helix" evidence="18">
    <location>
        <begin position="431"/>
        <end position="444"/>
    </location>
</feature>
<feature type="strand" evidence="18">
    <location>
        <begin position="449"/>
        <end position="454"/>
    </location>
</feature>
<feature type="helix" evidence="18">
    <location>
        <begin position="461"/>
        <end position="472"/>
    </location>
</feature>
<feature type="helix" evidence="18">
    <location>
        <begin position="473"/>
        <end position="475"/>
    </location>
</feature>
<feature type="helix" evidence="18">
    <location>
        <begin position="478"/>
        <end position="481"/>
    </location>
</feature>
<feature type="strand" evidence="18">
    <location>
        <begin position="486"/>
        <end position="490"/>
    </location>
</feature>
<feature type="strand" evidence="18">
    <location>
        <begin position="494"/>
        <end position="496"/>
    </location>
</feature>
<feature type="helix" evidence="18">
    <location>
        <begin position="498"/>
        <end position="512"/>
    </location>
</feature>
<feature type="strand" evidence="18">
    <location>
        <begin position="515"/>
        <end position="521"/>
    </location>
</feature>
<feature type="helix" evidence="18">
    <location>
        <begin position="529"/>
        <end position="542"/>
    </location>
</feature>
<feature type="strand" evidence="18">
    <location>
        <begin position="545"/>
        <end position="552"/>
    </location>
</feature>
<feature type="helix" evidence="18">
    <location>
        <begin position="558"/>
        <end position="572"/>
    </location>
</feature>
<feature type="strand" evidence="18">
    <location>
        <begin position="576"/>
        <end position="578"/>
    </location>
</feature>
<feature type="strand" evidence="18">
    <location>
        <begin position="584"/>
        <end position="588"/>
    </location>
</feature>
<feature type="helix" evidence="17">
    <location>
        <begin position="590"/>
        <end position="592"/>
    </location>
</feature>
<feature type="helix" evidence="18">
    <location>
        <begin position="599"/>
        <end position="606"/>
    </location>
</feature>
<feature type="strand" evidence="18">
    <location>
        <begin position="611"/>
        <end position="615"/>
    </location>
</feature>
<feature type="strand" evidence="18">
    <location>
        <begin position="617"/>
        <end position="619"/>
    </location>
</feature>
<feature type="helix" evidence="18">
    <location>
        <begin position="628"/>
        <end position="637"/>
    </location>
</feature>
<comment type="function">
    <text evidence="4 5 7">Component of the signal recognition particle (SRP) complex receptor (SR) (PubMed:16439358). Ensures, in conjunction with the SRP complex, the correct targeting of the nascent secretory proteins to the endoplasmic reticulum membrane system (PubMed:16675701, PubMed:34020957). Forms a guanosine 5'-triphosphate (GTP)-dependent complex with the SRP subunit SRP54 (PubMed:34020957). SRP receptor compaction and GTPase rearrangement drive SRP-mediated cotranslational protein translocation into the ER (PubMed:34020957).</text>
</comment>
<comment type="subunit">
    <text evidence="4 7">Heterodimer with SRPRB (PubMed:16439358). Interacts with the signal recognition particle (SRP) complex subunit SRP54 (PubMed:34020957).</text>
</comment>
<comment type="subunit">
    <text evidence="6">(Microbial infection) May interact with Zika virus strain Mr-766 non-structural protein 4A/NS4A (PubMed:30550790). May interact with Zika virus French Polynesia 10087PF/2013 non-structural protein 4A/NS4A (PubMed:30550790).</text>
</comment>
<comment type="subunit">
    <text evidence="6">(Microbial infection) May interact with Dengue virus DENV2 16681 non-structural protein 4A/NS4A.</text>
</comment>
<comment type="interaction">
    <interactant intactId="EBI-726981">
        <id>P08240</id>
    </interactant>
    <interactant intactId="EBI-2854176">
        <id>P61011</id>
        <label>SRP54</label>
    </interactant>
    <organismsDiffer>false</organismsDiffer>
    <experiments>2</experiments>
</comment>
<comment type="subcellular location">
    <subcellularLocation>
        <location evidence="2">Endoplasmic reticulum membrane</location>
        <topology evidence="2">Peripheral membrane protein</topology>
        <orientation evidence="2">Cytoplasmic side</orientation>
    </subcellularLocation>
    <text evidence="2">Thought to be anchored in the membrane through an interaction with SR-beta, which contains a bona fide transmembrane domain.</text>
</comment>
<comment type="alternative products">
    <event type="alternative splicing"/>
    <isoform>
        <id>P08240-1</id>
        <name>1</name>
        <sequence type="displayed"/>
    </isoform>
    <isoform>
        <id>P08240-2</id>
        <name>2</name>
        <sequence type="described" ref="VSP_046055"/>
    </isoform>
</comment>
<comment type="domain">
    <text evidence="7">The NG domain region, also named G domain, is a special guanosine triphosphatase (GTPase) domain, which forms a guanosine 5'-triphosphate (GTP)-dependent complex with a homologous NG domain in the signal recognition particle (SRP) complex subunit SRP54 (PubMed:34020957). The two NG domains undergo cooperative rearrangements upon their assembly, which culminate in the reciprocal activation of the GTPase activity of one another (PubMed:34020957). GTPase induced rearrangement of SR drives SRP-mediated cotranslational protein translocation into the ER (PubMed:34020957).</text>
</comment>
<comment type="similarity">
    <text evidence="10">Belongs to the GTP-binding SRP family.</text>
</comment>
<protein>
    <recommendedName>
        <fullName>Signal recognition particle receptor subunit alpha</fullName>
        <shortName>SR-alpha</shortName>
    </recommendedName>
    <alternativeName>
        <fullName>Docking protein alpha</fullName>
        <shortName>DP-alpha</shortName>
    </alternativeName>
</protein>
<evidence type="ECO:0000250" key="1"/>
<evidence type="ECO:0000250" key="2">
    <source>
        <dbReference type="UniProtKB" id="P32916"/>
    </source>
</evidence>
<evidence type="ECO:0000256" key="3">
    <source>
        <dbReference type="SAM" id="MobiDB-lite"/>
    </source>
</evidence>
<evidence type="ECO:0000269" key="4">
    <source>
    </source>
</evidence>
<evidence type="ECO:0000269" key="5">
    <source>
    </source>
</evidence>
<evidence type="ECO:0000269" key="6">
    <source>
    </source>
</evidence>
<evidence type="ECO:0000269" key="7">
    <source>
    </source>
</evidence>
<evidence type="ECO:0000303" key="8">
    <source>
    </source>
</evidence>
<evidence type="ECO:0000303" key="9">
    <source>
    </source>
</evidence>
<evidence type="ECO:0000305" key="10"/>
<evidence type="ECO:0000312" key="11">
    <source>
        <dbReference type="HGNC" id="HGNC:11307"/>
    </source>
</evidence>
<evidence type="ECO:0007744" key="12">
    <source>
        <dbReference type="PDB" id="7NFX"/>
    </source>
</evidence>
<evidence type="ECO:0007744" key="13">
    <source>
    </source>
</evidence>
<evidence type="ECO:0007744" key="14">
    <source>
    </source>
</evidence>
<evidence type="ECO:0007744" key="15">
    <source>
    </source>
</evidence>
<evidence type="ECO:0007829" key="16">
    <source>
        <dbReference type="PDB" id="2FH5"/>
    </source>
</evidence>
<evidence type="ECO:0007829" key="17">
    <source>
        <dbReference type="PDB" id="5L3Q"/>
    </source>
</evidence>
<evidence type="ECO:0007829" key="18">
    <source>
        <dbReference type="PDB" id="6Y32"/>
    </source>
</evidence>
<name>SRPRA_HUMAN</name>
<reference key="1">
    <citation type="journal article" date="1988" name="Nucleic Acids Res.">
        <title>Complete cDNA sequence coding for human docking protein.</title>
        <authorList>
            <person name="Hortsch M."/>
            <person name="Labeit S."/>
            <person name="Meyer D.I."/>
        </authorList>
    </citation>
    <scope>NUCLEOTIDE SEQUENCE [MRNA] (ISOFORM 1)</scope>
</reference>
<reference key="2">
    <citation type="journal article" date="2004" name="Nat. Genet.">
        <title>Complete sequencing and characterization of 21,243 full-length human cDNAs.</title>
        <authorList>
            <person name="Ota T."/>
            <person name="Suzuki Y."/>
            <person name="Nishikawa T."/>
            <person name="Otsuki T."/>
            <person name="Sugiyama T."/>
            <person name="Irie R."/>
            <person name="Wakamatsu A."/>
            <person name="Hayashi K."/>
            <person name="Sato H."/>
            <person name="Nagai K."/>
            <person name="Kimura K."/>
            <person name="Makita H."/>
            <person name="Sekine M."/>
            <person name="Obayashi M."/>
            <person name="Nishi T."/>
            <person name="Shibahara T."/>
            <person name="Tanaka T."/>
            <person name="Ishii S."/>
            <person name="Yamamoto J."/>
            <person name="Saito K."/>
            <person name="Kawai Y."/>
            <person name="Isono Y."/>
            <person name="Nakamura Y."/>
            <person name="Nagahari K."/>
            <person name="Murakami K."/>
            <person name="Yasuda T."/>
            <person name="Iwayanagi T."/>
            <person name="Wagatsuma M."/>
            <person name="Shiratori A."/>
            <person name="Sudo H."/>
            <person name="Hosoiri T."/>
            <person name="Kaku Y."/>
            <person name="Kodaira H."/>
            <person name="Kondo H."/>
            <person name="Sugawara M."/>
            <person name="Takahashi M."/>
            <person name="Kanda K."/>
            <person name="Yokoi T."/>
            <person name="Furuya T."/>
            <person name="Kikkawa E."/>
            <person name="Omura Y."/>
            <person name="Abe K."/>
            <person name="Kamihara K."/>
            <person name="Katsuta N."/>
            <person name="Sato K."/>
            <person name="Tanikawa M."/>
            <person name="Yamazaki M."/>
            <person name="Ninomiya K."/>
            <person name="Ishibashi T."/>
            <person name="Yamashita H."/>
            <person name="Murakawa K."/>
            <person name="Fujimori K."/>
            <person name="Tanai H."/>
            <person name="Kimata M."/>
            <person name="Watanabe M."/>
            <person name="Hiraoka S."/>
            <person name="Chiba Y."/>
            <person name="Ishida S."/>
            <person name="Ono Y."/>
            <person name="Takiguchi S."/>
            <person name="Watanabe S."/>
            <person name="Yosida M."/>
            <person name="Hotuta T."/>
            <person name="Kusano J."/>
            <person name="Kanehori K."/>
            <person name="Takahashi-Fujii A."/>
            <person name="Hara H."/>
            <person name="Tanase T.-O."/>
            <person name="Nomura Y."/>
            <person name="Togiya S."/>
            <person name="Komai F."/>
            <person name="Hara R."/>
            <person name="Takeuchi K."/>
            <person name="Arita M."/>
            <person name="Imose N."/>
            <person name="Musashino K."/>
            <person name="Yuuki H."/>
            <person name="Oshima A."/>
            <person name="Sasaki N."/>
            <person name="Aotsuka S."/>
            <person name="Yoshikawa Y."/>
            <person name="Matsunawa H."/>
            <person name="Ichihara T."/>
            <person name="Shiohata N."/>
            <person name="Sano S."/>
            <person name="Moriya S."/>
            <person name="Momiyama H."/>
            <person name="Satoh N."/>
            <person name="Takami S."/>
            <person name="Terashima Y."/>
            <person name="Suzuki O."/>
            <person name="Nakagawa S."/>
            <person name="Senoh A."/>
            <person name="Mizoguchi H."/>
            <person name="Goto Y."/>
            <person name="Shimizu F."/>
            <person name="Wakebe H."/>
            <person name="Hishigaki H."/>
            <person name="Watanabe T."/>
            <person name="Sugiyama A."/>
            <person name="Takemoto M."/>
            <person name="Kawakami B."/>
            <person name="Yamazaki M."/>
            <person name="Watanabe K."/>
            <person name="Kumagai A."/>
            <person name="Itakura S."/>
            <person name="Fukuzumi Y."/>
            <person name="Fujimori Y."/>
            <person name="Komiyama M."/>
            <person name="Tashiro H."/>
            <person name="Tanigami A."/>
            <person name="Fujiwara T."/>
            <person name="Ono T."/>
            <person name="Yamada K."/>
            <person name="Fujii Y."/>
            <person name="Ozaki K."/>
            <person name="Hirao M."/>
            <person name="Ohmori Y."/>
            <person name="Kawabata A."/>
            <person name="Hikiji T."/>
            <person name="Kobatake N."/>
            <person name="Inagaki H."/>
            <person name="Ikema Y."/>
            <person name="Okamoto S."/>
            <person name="Okitani R."/>
            <person name="Kawakami T."/>
            <person name="Noguchi S."/>
            <person name="Itoh T."/>
            <person name="Shigeta K."/>
            <person name="Senba T."/>
            <person name="Matsumura K."/>
            <person name="Nakajima Y."/>
            <person name="Mizuno T."/>
            <person name="Morinaga M."/>
            <person name="Sasaki M."/>
            <person name="Togashi T."/>
            <person name="Oyama M."/>
            <person name="Hata H."/>
            <person name="Watanabe M."/>
            <person name="Komatsu T."/>
            <person name="Mizushima-Sugano J."/>
            <person name="Satoh T."/>
            <person name="Shirai Y."/>
            <person name="Takahashi Y."/>
            <person name="Nakagawa K."/>
            <person name="Okumura K."/>
            <person name="Nagase T."/>
            <person name="Nomura N."/>
            <person name="Kikuchi H."/>
            <person name="Masuho Y."/>
            <person name="Yamashita R."/>
            <person name="Nakai K."/>
            <person name="Yada T."/>
            <person name="Nakamura Y."/>
            <person name="Ohara O."/>
            <person name="Isogai T."/>
            <person name="Sugano S."/>
        </authorList>
    </citation>
    <scope>NUCLEOTIDE SEQUENCE [LARGE SCALE MRNA] (ISOFORMS 1 AND 2)</scope>
    <source>
        <tissue>Amygdala</tissue>
        <tissue>Thymus</tissue>
    </source>
</reference>
<reference key="3">
    <citation type="journal article" date="2006" name="Nature">
        <title>Human chromosome 11 DNA sequence and analysis including novel gene identification.</title>
        <authorList>
            <person name="Taylor T.D."/>
            <person name="Noguchi H."/>
            <person name="Totoki Y."/>
            <person name="Toyoda A."/>
            <person name="Kuroki Y."/>
            <person name="Dewar K."/>
            <person name="Lloyd C."/>
            <person name="Itoh T."/>
            <person name="Takeda T."/>
            <person name="Kim D.-W."/>
            <person name="She X."/>
            <person name="Barlow K.F."/>
            <person name="Bloom T."/>
            <person name="Bruford E."/>
            <person name="Chang J.L."/>
            <person name="Cuomo C.A."/>
            <person name="Eichler E."/>
            <person name="FitzGerald M.G."/>
            <person name="Jaffe D.B."/>
            <person name="LaButti K."/>
            <person name="Nicol R."/>
            <person name="Park H.-S."/>
            <person name="Seaman C."/>
            <person name="Sougnez C."/>
            <person name="Yang X."/>
            <person name="Zimmer A.R."/>
            <person name="Zody M.C."/>
            <person name="Birren B.W."/>
            <person name="Nusbaum C."/>
            <person name="Fujiyama A."/>
            <person name="Hattori M."/>
            <person name="Rogers J."/>
            <person name="Lander E.S."/>
            <person name="Sakaki Y."/>
        </authorList>
    </citation>
    <scope>NUCLEOTIDE SEQUENCE [LARGE SCALE GENOMIC DNA]</scope>
</reference>
<reference key="4">
    <citation type="submission" date="2005-07" db="EMBL/GenBank/DDBJ databases">
        <authorList>
            <person name="Mural R.J."/>
            <person name="Istrail S."/>
            <person name="Sutton G.G."/>
            <person name="Florea L."/>
            <person name="Halpern A.L."/>
            <person name="Mobarry C.M."/>
            <person name="Lippert R."/>
            <person name="Walenz B."/>
            <person name="Shatkay H."/>
            <person name="Dew I."/>
            <person name="Miller J.R."/>
            <person name="Flanigan M.J."/>
            <person name="Edwards N.J."/>
            <person name="Bolanos R."/>
            <person name="Fasulo D."/>
            <person name="Halldorsson B.V."/>
            <person name="Hannenhalli S."/>
            <person name="Turner R."/>
            <person name="Yooseph S."/>
            <person name="Lu F."/>
            <person name="Nusskern D.R."/>
            <person name="Shue B.C."/>
            <person name="Zheng X.H."/>
            <person name="Zhong F."/>
            <person name="Delcher A.L."/>
            <person name="Huson D.H."/>
            <person name="Kravitz S.A."/>
            <person name="Mouchard L."/>
            <person name="Reinert K."/>
            <person name="Remington K.A."/>
            <person name="Clark A.G."/>
            <person name="Waterman M.S."/>
            <person name="Eichler E.E."/>
            <person name="Adams M.D."/>
            <person name="Hunkapiller M.W."/>
            <person name="Myers E.W."/>
            <person name="Venter J.C."/>
        </authorList>
    </citation>
    <scope>NUCLEOTIDE SEQUENCE [LARGE SCALE GENOMIC DNA]</scope>
</reference>
<reference key="5">
    <citation type="journal article" date="2004" name="Genome Res.">
        <title>The status, quality, and expansion of the NIH full-length cDNA project: the Mammalian Gene Collection (MGC).</title>
        <authorList>
            <consortium name="The MGC Project Team"/>
        </authorList>
    </citation>
    <scope>NUCLEOTIDE SEQUENCE [LARGE SCALE MRNA] (ISOFORM 1)</scope>
    <source>
        <tissue>Lung</tissue>
        <tissue>Muscle</tissue>
        <tissue>Placenta</tissue>
    </source>
</reference>
<reference key="6">
    <citation type="journal article" date="2005" name="Nat. Biotechnol.">
        <title>Immunoaffinity profiling of tyrosine phosphorylation in cancer cells.</title>
        <authorList>
            <person name="Rush J."/>
            <person name="Moritz A."/>
            <person name="Lee K.A."/>
            <person name="Guo A."/>
            <person name="Goss V.L."/>
            <person name="Spek E.J."/>
            <person name="Zhang H."/>
            <person name="Zha X.-M."/>
            <person name="Polakiewicz R.D."/>
            <person name="Comb M.J."/>
        </authorList>
    </citation>
    <scope>IDENTIFICATION BY MASS SPECTROMETRY [LARGE SCALE ANALYSIS]</scope>
</reference>
<reference key="7">
    <citation type="journal article" date="2006" name="Cell">
        <title>Global, in vivo, and site-specific phosphorylation dynamics in signaling networks.</title>
        <authorList>
            <person name="Olsen J.V."/>
            <person name="Blagoev B."/>
            <person name="Gnad F."/>
            <person name="Macek B."/>
            <person name="Kumar C."/>
            <person name="Mortensen P."/>
            <person name="Mann M."/>
        </authorList>
    </citation>
    <scope>IDENTIFICATION BY MASS SPECTROMETRY [LARGE SCALE ANALYSIS]</scope>
    <source>
        <tissue>Cervix carcinoma</tissue>
    </source>
</reference>
<reference key="8">
    <citation type="journal article" date="2008" name="Proc. Natl. Acad. Sci. U.S.A.">
        <title>A quantitative atlas of mitotic phosphorylation.</title>
        <authorList>
            <person name="Dephoure N."/>
            <person name="Zhou C."/>
            <person name="Villen J."/>
            <person name="Beausoleil S.A."/>
            <person name="Bakalarski C.E."/>
            <person name="Elledge S.J."/>
            <person name="Gygi S.P."/>
        </authorList>
    </citation>
    <scope>PHOSPHORYLATION [LARGE SCALE ANALYSIS] AT SER-296; SER-297 AND SER-298</scope>
    <scope>IDENTIFICATION BY MASS SPECTROMETRY [LARGE SCALE ANALYSIS]</scope>
    <source>
        <tissue>Cervix carcinoma</tissue>
    </source>
</reference>
<reference key="9">
    <citation type="journal article" date="2010" name="Sci. Signal.">
        <title>Quantitative phosphoproteomics reveals widespread full phosphorylation site occupancy during mitosis.</title>
        <authorList>
            <person name="Olsen J.V."/>
            <person name="Vermeulen M."/>
            <person name="Santamaria A."/>
            <person name="Kumar C."/>
            <person name="Miller M.L."/>
            <person name="Jensen L.J."/>
            <person name="Gnad F."/>
            <person name="Cox J."/>
            <person name="Jensen T.S."/>
            <person name="Nigg E.A."/>
            <person name="Brunak S."/>
            <person name="Mann M."/>
        </authorList>
    </citation>
    <scope>IDENTIFICATION BY MASS SPECTROMETRY [LARGE SCALE ANALYSIS]</scope>
    <source>
        <tissue>Cervix carcinoma</tissue>
    </source>
</reference>
<reference key="10">
    <citation type="journal article" date="2011" name="BMC Syst. Biol.">
        <title>Initial characterization of the human central proteome.</title>
        <authorList>
            <person name="Burkard T.R."/>
            <person name="Planyavsky M."/>
            <person name="Kaupe I."/>
            <person name="Breitwieser F.P."/>
            <person name="Buerckstuemmer T."/>
            <person name="Bennett K.L."/>
            <person name="Superti-Furga G."/>
            <person name="Colinge J."/>
        </authorList>
    </citation>
    <scope>IDENTIFICATION BY MASS SPECTROMETRY [LARGE SCALE ANALYSIS]</scope>
</reference>
<reference key="11">
    <citation type="journal article" date="2012" name="Mol. Cell. Proteomics">
        <title>Comparative large-scale characterisation of plant vs. mammal proteins reveals similar and idiosyncratic N-alpha acetylation features.</title>
        <authorList>
            <person name="Bienvenut W.V."/>
            <person name="Sumpton D."/>
            <person name="Martinez A."/>
            <person name="Lilla S."/>
            <person name="Espagne C."/>
            <person name="Meinnel T."/>
            <person name="Giglione C."/>
        </authorList>
    </citation>
    <scope>IDENTIFICATION BY MASS SPECTROMETRY [LARGE SCALE ANALYSIS]</scope>
</reference>
<reference key="12">
    <citation type="journal article" date="2013" name="J. Proteome Res.">
        <title>Toward a comprehensive characterization of a human cancer cell phosphoproteome.</title>
        <authorList>
            <person name="Zhou H."/>
            <person name="Di Palma S."/>
            <person name="Preisinger C."/>
            <person name="Peng M."/>
            <person name="Polat A.N."/>
            <person name="Heck A.J."/>
            <person name="Mohammed S."/>
        </authorList>
    </citation>
    <scope>PHOSPHORYLATION [LARGE SCALE ANALYSIS] AT SER-177; SER-473 AND THR-578</scope>
    <scope>IDENTIFICATION BY MASS SPECTROMETRY [LARGE SCALE ANALYSIS]</scope>
    <source>
        <tissue>Cervix carcinoma</tissue>
        <tissue>Erythroleukemia</tissue>
    </source>
</reference>
<reference key="13">
    <citation type="journal article" date="2014" name="J. Proteomics">
        <title>An enzyme assisted RP-RPLC approach for in-depth analysis of human liver phosphoproteome.</title>
        <authorList>
            <person name="Bian Y."/>
            <person name="Song C."/>
            <person name="Cheng K."/>
            <person name="Dong M."/>
            <person name="Wang F."/>
            <person name="Huang J."/>
            <person name="Sun D."/>
            <person name="Wang L."/>
            <person name="Ye M."/>
            <person name="Zou H."/>
        </authorList>
    </citation>
    <scope>PHOSPHORYLATION [LARGE SCALE ANALYSIS] AT THR-284; SER-296; SER-297 AND SER-298</scope>
    <scope>IDENTIFICATION BY MASS SPECTROMETRY [LARGE SCALE ANALYSIS]</scope>
    <source>
        <tissue>Liver</tissue>
    </source>
</reference>
<reference key="14">
    <citation type="journal article" date="2015" name="Proteomics">
        <title>N-terminome analysis of the human mitochondrial proteome.</title>
        <authorList>
            <person name="Vaca Jacome A.S."/>
            <person name="Rabilloud T."/>
            <person name="Schaeffer-Reiss C."/>
            <person name="Rompais M."/>
            <person name="Ayoub D."/>
            <person name="Lane L."/>
            <person name="Bairoch A."/>
            <person name="Van Dorsselaer A."/>
            <person name="Carapito C."/>
        </authorList>
    </citation>
    <scope>IDENTIFICATION BY MASS SPECTROMETRY [LARGE SCALE ANALYSIS]</scope>
</reference>
<reference key="15">
    <citation type="journal article" date="2018" name="Cell">
        <title>Comparative Flavivirus-Host Protein Interaction Mapping Reveals Mechanisms of Dengue and Zika Virus Pathogenesis.</title>
        <authorList>
            <person name="Shah P.S."/>
            <person name="Link N."/>
            <person name="Jang G.M."/>
            <person name="Sharp P.P."/>
            <person name="Zhu T."/>
            <person name="Swaney D.L."/>
            <person name="Johnson J.R."/>
            <person name="Von Dollen J."/>
            <person name="Ramage H.R."/>
            <person name="Satkamp L."/>
            <person name="Newton B."/>
            <person name="Huettenhain R."/>
            <person name="Petit M.J."/>
            <person name="Baum T."/>
            <person name="Everitt A."/>
            <person name="Laufman O."/>
            <person name="Tassetto M."/>
            <person name="Shales M."/>
            <person name="Stevenson E."/>
            <person name="Iglesias G.N."/>
            <person name="Shokat L."/>
            <person name="Tripathi S."/>
            <person name="Balasubramaniam V."/>
            <person name="Webb L.G."/>
            <person name="Aguirre S."/>
            <person name="Willsey A.J."/>
            <person name="Garcia-Sastre A."/>
            <person name="Pollard K.S."/>
            <person name="Cherry S."/>
            <person name="Gamarnik A.V."/>
            <person name="Marazzi I."/>
            <person name="Taunton J."/>
            <person name="Fernandez-Sesma A."/>
            <person name="Bellen H.J."/>
            <person name="Andino R."/>
            <person name="Krogan N.J."/>
        </authorList>
    </citation>
    <scope>INTERACTION WITH ZIKA VIRUS FRENCH POLYNESIA 10087PF/2013 NS4A; ZIKA VIRUS MR-766 NS4A AND DENGUE VIRUS DENV2 16681 NS4A</scope>
</reference>
<reference key="16">
    <citation type="journal article" date="2006" name="J. Biol. Chem.">
        <title>The structure of the mammalian signal recognition particle (SRP) receptor as prototype for the interaction of small GTPases with Longin domains.</title>
        <authorList>
            <person name="Schlenker O."/>
            <person name="Hendricks A."/>
            <person name="Sinning I."/>
            <person name="Wild K."/>
        </authorList>
    </citation>
    <scope>X-RAY CRYSTALLOGRAPHY (2.45 ANGSTROMS) OF 3-176 IN COMPLEX WITH SRPRB</scope>
    <scope>FUNCTION</scope>
    <scope>SUBUNIT</scope>
</reference>
<reference key="17">
    <citation type="journal article" date="2006" name="Science">
        <title>Signal recognition particle receptor exposes the ribosomal translocon binding site.</title>
        <authorList>
            <person name="Halic M."/>
            <person name="Gartmann M."/>
            <person name="Schlenker O."/>
            <person name="Mielke T."/>
            <person name="Pool M.R."/>
            <person name="Sinning I."/>
            <person name="Beckmann R."/>
        </authorList>
    </citation>
    <scope>STRUCTURE BY ELECTRON MICROSCOPY (7.4 ANGSTROMS) OF 3-176 OF SIGNAL RECOGNITION PARTICLE IN COMPLEX WITH THE 80S RIBOSOME AND THE SRP RECEPTOR</scope>
    <scope>FUNCTION</scope>
</reference>
<reference evidence="12" key="18">
    <citation type="journal article" date="2021" name="Sci. Adv.">
        <title>Receptor compaction and GTPase rearrangement drive SRP-mediated cotranslational protein translocation into the ER.</title>
        <authorList>
            <person name="Lee J.H."/>
            <person name="Jomaa A."/>
            <person name="Jomaa A."/>
            <person name="Chung S."/>
            <person name="Hwang Fu Y.H."/>
            <person name="Qian R."/>
            <person name="Sun X."/>
            <person name="Hsieh H.H."/>
            <person name="Chandrasekar S."/>
            <person name="Bi X."/>
            <person name="Mattei S."/>
            <person name="Boehringer D."/>
            <person name="Weiss S."/>
            <person name="Ban N."/>
            <person name="Shan S.O."/>
        </authorList>
    </citation>
    <scope>STRUCTURE BY ELECTRON MICROSCOPY (3.20 ANGSTROMS) OF SIGNAL RECOGNITION PARTICLE IN COMPLEX WITH RIBOSOME NASCENT CHAIN COMPLEX AND THE SRP RECEPTOR</scope>
    <scope>FUNCTION</scope>
    <scope>INTERACTION WITH SRP54</scope>
    <scope>MUTAGENESIS OF ARG-407</scope>
</reference>
<gene>
    <name evidence="11" type="primary">SRPRA</name>
    <name type="synonym">SRPR</name>
</gene>
<keyword id="KW-0002">3D-structure</keyword>
<keyword id="KW-0025">Alternative splicing</keyword>
<keyword id="KW-0256">Endoplasmic reticulum</keyword>
<keyword id="KW-0342">GTP-binding</keyword>
<keyword id="KW-0472">Membrane</keyword>
<keyword id="KW-0547">Nucleotide-binding</keyword>
<keyword id="KW-0597">Phosphoprotein</keyword>
<keyword id="KW-1267">Proteomics identification</keyword>
<keyword id="KW-0675">Receptor</keyword>
<keyword id="KW-1185">Reference proteome</keyword>